<comment type="subcellular location">
    <subcellularLocation>
        <location evidence="1">Mitochondrion</location>
    </subcellularLocation>
</comment>
<comment type="similarity">
    <text evidence="2">Belongs to the RRG7 family.</text>
</comment>
<keyword id="KW-0496">Mitochondrion</keyword>
<keyword id="KW-1185">Reference proteome</keyword>
<sequence length="250" mass="28457">MMMNPRGFGIKRFKRSINNDSLTKFINDNRNIESSTVFQGNLYEYTVMRELESKLNVINMMKIGGSNDGGIDLVGDWPLRTIYEKMNLILKLDGNKIPSISKINGRTIKPIYNSILKGNLDTMDLKILVQCKAFSSSKVSPKELRELVGAYSTHCNRPSDKNKTIVMMCSPNLLTSKGLELINSVKIPLIYLRVSLIKNLNKEYDIENSGKLLNYYENSYTSELLQNLGVKEWLKLGLYNADLNSRNNVK</sequence>
<name>RRG7_VANPO</name>
<accession>A7TI13</accession>
<evidence type="ECO:0000250" key="1"/>
<evidence type="ECO:0000305" key="2"/>
<reference key="1">
    <citation type="journal article" date="2007" name="Proc. Natl. Acad. Sci. U.S.A.">
        <title>Independent sorting-out of thousands of duplicated gene pairs in two yeast species descended from a whole-genome duplication.</title>
        <authorList>
            <person name="Scannell D.R."/>
            <person name="Frank A.C."/>
            <person name="Conant G.C."/>
            <person name="Byrne K.P."/>
            <person name="Woolfit M."/>
            <person name="Wolfe K.H."/>
        </authorList>
    </citation>
    <scope>NUCLEOTIDE SEQUENCE [LARGE SCALE GENOMIC DNA]</scope>
    <source>
        <strain>ATCC 22028 / DSM 70294 / BCRC 21397 / CBS 2163 / NBRC 10782 / NRRL Y-8283 / UCD 57-17</strain>
    </source>
</reference>
<dbReference type="EMBL" id="DS480394">
    <property type="protein sequence ID" value="EDO18020.1"/>
    <property type="molecule type" value="Genomic_DNA"/>
</dbReference>
<dbReference type="RefSeq" id="XP_001645878.1">
    <property type="nucleotide sequence ID" value="XM_001645828.1"/>
</dbReference>
<dbReference type="FunCoup" id="A7TI13">
    <property type="interactions" value="54"/>
</dbReference>
<dbReference type="GeneID" id="5546283"/>
<dbReference type="KEGG" id="vpo:Kpol_1045p4"/>
<dbReference type="eggNOG" id="ENOG502RZ1Q">
    <property type="taxonomic scope" value="Eukaryota"/>
</dbReference>
<dbReference type="HOGENOM" id="CLU_085105_1_0_1"/>
<dbReference type="InParanoid" id="A7TI13"/>
<dbReference type="OMA" id="YYENEYA"/>
<dbReference type="OrthoDB" id="20734at2759"/>
<dbReference type="PhylomeDB" id="A7TI13"/>
<dbReference type="Proteomes" id="UP000000267">
    <property type="component" value="Unassembled WGS sequence"/>
</dbReference>
<dbReference type="GO" id="GO:0005739">
    <property type="term" value="C:mitochondrion"/>
    <property type="evidence" value="ECO:0007669"/>
    <property type="project" value="UniProtKB-SubCell"/>
</dbReference>
<dbReference type="GO" id="GO:0003676">
    <property type="term" value="F:nucleic acid binding"/>
    <property type="evidence" value="ECO:0007669"/>
    <property type="project" value="InterPro"/>
</dbReference>
<dbReference type="Gene3D" id="3.40.1350.10">
    <property type="match status" value="1"/>
</dbReference>
<dbReference type="InterPro" id="IPR018828">
    <property type="entry name" value="RRG7"/>
</dbReference>
<dbReference type="InterPro" id="IPR011856">
    <property type="entry name" value="tRNA_endonuc-like_dom_sf"/>
</dbReference>
<dbReference type="PANTHER" id="PTHR28133">
    <property type="entry name" value="REQUIRED FOR RESPIRATORY GROWTH PROTEIN 7, MITOCHONDRIAL"/>
    <property type="match status" value="1"/>
</dbReference>
<dbReference type="PANTHER" id="PTHR28133:SF1">
    <property type="entry name" value="REQUIRED FOR RESPIRATORY GROWTH PROTEIN 7, MITOCHONDRIAL"/>
    <property type="match status" value="1"/>
</dbReference>
<dbReference type="Pfam" id="PF10356">
    <property type="entry name" value="RRG7"/>
    <property type="match status" value="1"/>
</dbReference>
<organism>
    <name type="scientific">Vanderwaltozyma polyspora (strain ATCC 22028 / DSM 70294 / BCRC 21397 / CBS 2163 / NBRC 10782 / NRRL Y-8283 / UCD 57-17)</name>
    <name type="common">Kluyveromyces polysporus</name>
    <dbReference type="NCBI Taxonomy" id="436907"/>
    <lineage>
        <taxon>Eukaryota</taxon>
        <taxon>Fungi</taxon>
        <taxon>Dikarya</taxon>
        <taxon>Ascomycota</taxon>
        <taxon>Saccharomycotina</taxon>
        <taxon>Saccharomycetes</taxon>
        <taxon>Saccharomycetales</taxon>
        <taxon>Saccharomycetaceae</taxon>
        <taxon>Vanderwaltozyma</taxon>
    </lineage>
</organism>
<feature type="chain" id="PRO_0000405462" description="Required for respiratory growth protein 7, mitochondrial">
    <location>
        <begin position="1"/>
        <end position="250"/>
    </location>
</feature>
<protein>
    <recommendedName>
        <fullName>Required for respiratory growth protein 7, mitochondrial</fullName>
    </recommendedName>
</protein>
<gene>
    <name type="primary">RRG7</name>
    <name type="ORF">Kpol_1045p4</name>
</gene>
<proteinExistence type="inferred from homology"/>